<dbReference type="EMBL" id="CP000438">
    <property type="protein sequence ID" value="ABJ12978.1"/>
    <property type="molecule type" value="Genomic_DNA"/>
</dbReference>
<dbReference type="RefSeq" id="WP_003092640.1">
    <property type="nucleotide sequence ID" value="NZ_CP034244.1"/>
</dbReference>
<dbReference type="SMR" id="Q02RL7"/>
<dbReference type="KEGG" id="pau:PA14_15980"/>
<dbReference type="PseudoCAP" id="PA14_15980"/>
<dbReference type="HOGENOM" id="CLU_077636_1_0_6"/>
<dbReference type="BioCyc" id="PAER208963:G1G74-1315-MONOMER"/>
<dbReference type="Proteomes" id="UP000000653">
    <property type="component" value="Chromosome"/>
</dbReference>
<dbReference type="GO" id="GO:0005737">
    <property type="term" value="C:cytoplasm"/>
    <property type="evidence" value="ECO:0007669"/>
    <property type="project" value="UniProtKB-SubCell"/>
</dbReference>
<dbReference type="GO" id="GO:0005840">
    <property type="term" value="C:ribosome"/>
    <property type="evidence" value="ECO:0007669"/>
    <property type="project" value="InterPro"/>
</dbReference>
<dbReference type="GO" id="GO:0043022">
    <property type="term" value="F:ribosome binding"/>
    <property type="evidence" value="ECO:0007669"/>
    <property type="project" value="InterPro"/>
</dbReference>
<dbReference type="GO" id="GO:0042274">
    <property type="term" value="P:ribosomal small subunit biogenesis"/>
    <property type="evidence" value="ECO:0007669"/>
    <property type="project" value="UniProtKB-UniRule"/>
</dbReference>
<dbReference type="GO" id="GO:0006364">
    <property type="term" value="P:rRNA processing"/>
    <property type="evidence" value="ECO:0007669"/>
    <property type="project" value="UniProtKB-UniRule"/>
</dbReference>
<dbReference type="Gene3D" id="2.30.30.240">
    <property type="entry name" value="PRC-barrel domain"/>
    <property type="match status" value="1"/>
</dbReference>
<dbReference type="Gene3D" id="2.40.30.60">
    <property type="entry name" value="RimM"/>
    <property type="match status" value="1"/>
</dbReference>
<dbReference type="HAMAP" id="MF_00014">
    <property type="entry name" value="Ribosome_mat_RimM"/>
    <property type="match status" value="1"/>
</dbReference>
<dbReference type="InterPro" id="IPR011033">
    <property type="entry name" value="PRC_barrel-like_sf"/>
</dbReference>
<dbReference type="InterPro" id="IPR056792">
    <property type="entry name" value="PRC_RimM"/>
</dbReference>
<dbReference type="InterPro" id="IPR011961">
    <property type="entry name" value="RimM"/>
</dbReference>
<dbReference type="InterPro" id="IPR002676">
    <property type="entry name" value="RimM_N"/>
</dbReference>
<dbReference type="InterPro" id="IPR036976">
    <property type="entry name" value="RimM_N_sf"/>
</dbReference>
<dbReference type="InterPro" id="IPR009000">
    <property type="entry name" value="Transl_B-barrel_sf"/>
</dbReference>
<dbReference type="NCBIfam" id="TIGR02273">
    <property type="entry name" value="16S_RimM"/>
    <property type="match status" value="1"/>
</dbReference>
<dbReference type="PANTHER" id="PTHR33692">
    <property type="entry name" value="RIBOSOME MATURATION FACTOR RIMM"/>
    <property type="match status" value="1"/>
</dbReference>
<dbReference type="PANTHER" id="PTHR33692:SF1">
    <property type="entry name" value="RIBOSOME MATURATION FACTOR RIMM"/>
    <property type="match status" value="1"/>
</dbReference>
<dbReference type="Pfam" id="PF24986">
    <property type="entry name" value="PRC_RimM"/>
    <property type="match status" value="1"/>
</dbReference>
<dbReference type="Pfam" id="PF01782">
    <property type="entry name" value="RimM"/>
    <property type="match status" value="1"/>
</dbReference>
<dbReference type="SUPFAM" id="SSF50346">
    <property type="entry name" value="PRC-barrel domain"/>
    <property type="match status" value="1"/>
</dbReference>
<dbReference type="SUPFAM" id="SSF50447">
    <property type="entry name" value="Translation proteins"/>
    <property type="match status" value="1"/>
</dbReference>
<organism>
    <name type="scientific">Pseudomonas aeruginosa (strain UCBPP-PA14)</name>
    <dbReference type="NCBI Taxonomy" id="208963"/>
    <lineage>
        <taxon>Bacteria</taxon>
        <taxon>Pseudomonadati</taxon>
        <taxon>Pseudomonadota</taxon>
        <taxon>Gammaproteobacteria</taxon>
        <taxon>Pseudomonadales</taxon>
        <taxon>Pseudomonadaceae</taxon>
        <taxon>Pseudomonas</taxon>
    </lineage>
</organism>
<comment type="function">
    <text evidence="1">An accessory protein needed during the final step in the assembly of 30S ribosomal subunit, possibly for assembly of the head region. Essential for efficient processing of 16S rRNA. May be needed both before and after RbfA during the maturation of 16S rRNA. It has affinity for free ribosomal 30S subunits but not for 70S ribosomes.</text>
</comment>
<comment type="subunit">
    <text evidence="1">Binds ribosomal protein uS19.</text>
</comment>
<comment type="subcellular location">
    <subcellularLocation>
        <location evidence="1">Cytoplasm</location>
    </subcellularLocation>
</comment>
<comment type="domain">
    <text evidence="1">The PRC barrel domain binds ribosomal protein uS19.</text>
</comment>
<comment type="similarity">
    <text evidence="1">Belongs to the RimM family.</text>
</comment>
<name>RIMM_PSEAB</name>
<keyword id="KW-0143">Chaperone</keyword>
<keyword id="KW-0963">Cytoplasm</keyword>
<keyword id="KW-0690">Ribosome biogenesis</keyword>
<keyword id="KW-0698">rRNA processing</keyword>
<sequence length="175" mass="19690">MPTPADDLVVIGKIVSVYGIRGEVKVYSFTDPLDNLLDYRRWTLRRDGEIRQAELVRGRLHGKVLAAKLKGLDDREEARTFTGYEICIPRSELPSLEEGEYYWHQLEGLKVIDQGGQLLGVIDHLLETGANDVMVVKPCAGSLDDRERLLPYTGQCVLSIDLAAGEMRVDWDADF</sequence>
<accession>Q02RL7</accession>
<evidence type="ECO:0000255" key="1">
    <source>
        <dbReference type="HAMAP-Rule" id="MF_00014"/>
    </source>
</evidence>
<feature type="chain" id="PRO_1000001216" description="Ribosome maturation factor RimM">
    <location>
        <begin position="1"/>
        <end position="175"/>
    </location>
</feature>
<feature type="domain" description="PRC barrel" evidence="1">
    <location>
        <begin position="98"/>
        <end position="175"/>
    </location>
</feature>
<reference key="1">
    <citation type="journal article" date="2006" name="Genome Biol.">
        <title>Genomic analysis reveals that Pseudomonas aeruginosa virulence is combinatorial.</title>
        <authorList>
            <person name="Lee D.G."/>
            <person name="Urbach J.M."/>
            <person name="Wu G."/>
            <person name="Liberati N.T."/>
            <person name="Feinbaum R.L."/>
            <person name="Miyata S."/>
            <person name="Diggins L.T."/>
            <person name="He J."/>
            <person name="Saucier M."/>
            <person name="Deziel E."/>
            <person name="Friedman L."/>
            <person name="Li L."/>
            <person name="Grills G."/>
            <person name="Montgomery K."/>
            <person name="Kucherlapati R."/>
            <person name="Rahme L.G."/>
            <person name="Ausubel F.M."/>
        </authorList>
    </citation>
    <scope>NUCLEOTIDE SEQUENCE [LARGE SCALE GENOMIC DNA]</scope>
    <source>
        <strain>UCBPP-PA14</strain>
    </source>
</reference>
<proteinExistence type="inferred from homology"/>
<gene>
    <name evidence="1" type="primary">rimM</name>
    <name type="ordered locus">PA14_15980</name>
</gene>
<protein>
    <recommendedName>
        <fullName evidence="1">Ribosome maturation factor RimM</fullName>
    </recommendedName>
</protein>